<protein>
    <recommendedName>
        <fullName evidence="1">Lipid-A-disaccharide synthase</fullName>
        <ecNumber evidence="1">2.4.1.182</ecNumber>
    </recommendedName>
</protein>
<reference key="1">
    <citation type="submission" date="2007-10" db="EMBL/GenBank/DDBJ databases">
        <title>Complete sequence of Shewanella pealeana ATCC 700345.</title>
        <authorList>
            <consortium name="US DOE Joint Genome Institute"/>
            <person name="Copeland A."/>
            <person name="Lucas S."/>
            <person name="Lapidus A."/>
            <person name="Barry K."/>
            <person name="Glavina del Rio T."/>
            <person name="Dalin E."/>
            <person name="Tice H."/>
            <person name="Pitluck S."/>
            <person name="Chertkov O."/>
            <person name="Brettin T."/>
            <person name="Bruce D."/>
            <person name="Detter J.C."/>
            <person name="Han C."/>
            <person name="Schmutz J."/>
            <person name="Larimer F."/>
            <person name="Land M."/>
            <person name="Hauser L."/>
            <person name="Kyrpides N."/>
            <person name="Kim E."/>
            <person name="Zhao J.-S.Z."/>
            <person name="Manno D."/>
            <person name="Hawari J."/>
            <person name="Richardson P."/>
        </authorList>
    </citation>
    <scope>NUCLEOTIDE SEQUENCE [LARGE SCALE GENOMIC DNA]</scope>
    <source>
        <strain>ATCC 700345 / ANG-SQ1</strain>
    </source>
</reference>
<dbReference type="EC" id="2.4.1.182" evidence="1"/>
<dbReference type="EMBL" id="CP000851">
    <property type="protein sequence ID" value="ABV88190.1"/>
    <property type="molecule type" value="Genomic_DNA"/>
</dbReference>
<dbReference type="RefSeq" id="WP_012156095.1">
    <property type="nucleotide sequence ID" value="NC_009901.1"/>
</dbReference>
<dbReference type="SMR" id="A8H6K3"/>
<dbReference type="STRING" id="398579.Spea_2872"/>
<dbReference type="CAZy" id="GT19">
    <property type="family name" value="Glycosyltransferase Family 19"/>
</dbReference>
<dbReference type="KEGG" id="spl:Spea_2872"/>
<dbReference type="eggNOG" id="COG0763">
    <property type="taxonomic scope" value="Bacteria"/>
</dbReference>
<dbReference type="HOGENOM" id="CLU_036577_3_0_6"/>
<dbReference type="OrthoDB" id="9801642at2"/>
<dbReference type="UniPathway" id="UPA00973"/>
<dbReference type="Proteomes" id="UP000002608">
    <property type="component" value="Chromosome"/>
</dbReference>
<dbReference type="GO" id="GO:0016020">
    <property type="term" value="C:membrane"/>
    <property type="evidence" value="ECO:0007669"/>
    <property type="project" value="GOC"/>
</dbReference>
<dbReference type="GO" id="GO:0008915">
    <property type="term" value="F:lipid-A-disaccharide synthase activity"/>
    <property type="evidence" value="ECO:0007669"/>
    <property type="project" value="UniProtKB-UniRule"/>
</dbReference>
<dbReference type="GO" id="GO:0005543">
    <property type="term" value="F:phospholipid binding"/>
    <property type="evidence" value="ECO:0007669"/>
    <property type="project" value="TreeGrafter"/>
</dbReference>
<dbReference type="GO" id="GO:0009245">
    <property type="term" value="P:lipid A biosynthetic process"/>
    <property type="evidence" value="ECO:0007669"/>
    <property type="project" value="UniProtKB-UniRule"/>
</dbReference>
<dbReference type="CDD" id="cd01635">
    <property type="entry name" value="Glycosyltransferase_GTB-type"/>
    <property type="match status" value="1"/>
</dbReference>
<dbReference type="Gene3D" id="3.40.50.2000">
    <property type="entry name" value="Glycogen Phosphorylase B"/>
    <property type="match status" value="2"/>
</dbReference>
<dbReference type="HAMAP" id="MF_00392">
    <property type="entry name" value="LpxB"/>
    <property type="match status" value="1"/>
</dbReference>
<dbReference type="InterPro" id="IPR003835">
    <property type="entry name" value="Glyco_trans_19"/>
</dbReference>
<dbReference type="NCBIfam" id="TIGR00215">
    <property type="entry name" value="lpxB"/>
    <property type="match status" value="1"/>
</dbReference>
<dbReference type="PANTHER" id="PTHR30372">
    <property type="entry name" value="LIPID-A-DISACCHARIDE SYNTHASE"/>
    <property type="match status" value="1"/>
</dbReference>
<dbReference type="PANTHER" id="PTHR30372:SF4">
    <property type="entry name" value="LIPID-A-DISACCHARIDE SYNTHASE, MITOCHONDRIAL-RELATED"/>
    <property type="match status" value="1"/>
</dbReference>
<dbReference type="Pfam" id="PF02684">
    <property type="entry name" value="LpxB"/>
    <property type="match status" value="1"/>
</dbReference>
<dbReference type="SUPFAM" id="SSF53756">
    <property type="entry name" value="UDP-Glycosyltransferase/glycogen phosphorylase"/>
    <property type="match status" value="1"/>
</dbReference>
<feature type="chain" id="PRO_1000080285" description="Lipid-A-disaccharide synthase">
    <location>
        <begin position="1"/>
        <end position="383"/>
    </location>
</feature>
<comment type="function">
    <text evidence="1">Condensation of UDP-2,3-diacylglucosamine and 2,3-diacylglucosamine-1-phosphate to form lipid A disaccharide, a precursor of lipid A, a phosphorylated glycolipid that anchors the lipopolysaccharide to the outer membrane of the cell.</text>
</comment>
<comment type="catalytic activity">
    <reaction evidence="1">
        <text>a lipid X + a UDP-2-N,3-O-bis[(3R)-3-hydroxyacyl]-alpha-D-glucosamine = a lipid A disaccharide + UDP + H(+)</text>
        <dbReference type="Rhea" id="RHEA:67828"/>
        <dbReference type="ChEBI" id="CHEBI:15378"/>
        <dbReference type="ChEBI" id="CHEBI:58223"/>
        <dbReference type="ChEBI" id="CHEBI:137748"/>
        <dbReference type="ChEBI" id="CHEBI:176338"/>
        <dbReference type="ChEBI" id="CHEBI:176343"/>
        <dbReference type="EC" id="2.4.1.182"/>
    </reaction>
</comment>
<comment type="pathway">
    <text evidence="1">Bacterial outer membrane biogenesis; LPS lipid A biosynthesis.</text>
</comment>
<comment type="similarity">
    <text evidence="1">Belongs to the LpxB family.</text>
</comment>
<evidence type="ECO:0000255" key="1">
    <source>
        <dbReference type="HAMAP-Rule" id="MF_00392"/>
    </source>
</evidence>
<keyword id="KW-0328">Glycosyltransferase</keyword>
<keyword id="KW-0441">Lipid A biosynthesis</keyword>
<keyword id="KW-0444">Lipid biosynthesis</keyword>
<keyword id="KW-0443">Lipid metabolism</keyword>
<keyword id="KW-1185">Reference proteome</keyword>
<keyword id="KW-0808">Transferase</keyword>
<sequence length="383" mass="42615">MSSNNPRVFAMVAGEISGDILGAGLIKALQKQYPDAKFVGIGGPRMEALGFESIFSYEELAVMGIVEVLSRLPRLLKVRATLIDELVKTQPDCFIGIDAPDFNIGLELKLKNRGIKTVHYVSPSVWAWRPKRIFKIAKATDMVLSLLPFEKAFYDEYQVPCTFVGHTLADDIELESDKAQARELLGLDKEAEYLAILPGSRGGELKMLAEPFVKAASLIKLRYPDIKFVTPLVNQKRRDQFEQALREHAPDLEIHLIEGHSREVMAAADCILLASGTATLEAMLVKRPMVVAYRVSPITYRIAKGMMLTKRYSLPNLLADDDVVEELIQADCTPEKIAAAVATQLDNDFTPMYDRFMQMHKGLRCDASARAADAVIKLVEDNV</sequence>
<proteinExistence type="inferred from homology"/>
<accession>A8H6K3</accession>
<organism>
    <name type="scientific">Shewanella pealeana (strain ATCC 700345 / ANG-SQ1)</name>
    <dbReference type="NCBI Taxonomy" id="398579"/>
    <lineage>
        <taxon>Bacteria</taxon>
        <taxon>Pseudomonadati</taxon>
        <taxon>Pseudomonadota</taxon>
        <taxon>Gammaproteobacteria</taxon>
        <taxon>Alteromonadales</taxon>
        <taxon>Shewanellaceae</taxon>
        <taxon>Shewanella</taxon>
    </lineage>
</organism>
<gene>
    <name evidence="1" type="primary">lpxB</name>
    <name type="ordered locus">Spea_2872</name>
</gene>
<name>LPXB_SHEPA</name>